<keyword id="KW-0067">ATP-binding</keyword>
<keyword id="KW-0963">Cytoplasm</keyword>
<keyword id="KW-0347">Helicase</keyword>
<keyword id="KW-0378">Hydrolase</keyword>
<keyword id="KW-0396">Initiation factor</keyword>
<keyword id="KW-0547">Nucleotide-binding</keyword>
<keyword id="KW-0648">Protein biosynthesis</keyword>
<keyword id="KW-1185">Reference proteome</keyword>
<keyword id="KW-0694">RNA-binding</keyword>
<gene>
    <name type="primary">tif1</name>
    <name type="synonym">tif41</name>
    <name type="ORF">AO090005001461</name>
</gene>
<reference key="1">
    <citation type="journal article" date="2005" name="Nature">
        <title>Genome sequencing and analysis of Aspergillus oryzae.</title>
        <authorList>
            <person name="Machida M."/>
            <person name="Asai K."/>
            <person name="Sano M."/>
            <person name="Tanaka T."/>
            <person name="Kumagai T."/>
            <person name="Terai G."/>
            <person name="Kusumoto K."/>
            <person name="Arima T."/>
            <person name="Akita O."/>
            <person name="Kashiwagi Y."/>
            <person name="Abe K."/>
            <person name="Gomi K."/>
            <person name="Horiuchi H."/>
            <person name="Kitamoto K."/>
            <person name="Kobayashi T."/>
            <person name="Takeuchi M."/>
            <person name="Denning D.W."/>
            <person name="Galagan J.E."/>
            <person name="Nierman W.C."/>
            <person name="Yu J."/>
            <person name="Archer D.B."/>
            <person name="Bennett J.W."/>
            <person name="Bhatnagar D."/>
            <person name="Cleveland T.E."/>
            <person name="Fedorova N.D."/>
            <person name="Gotoh O."/>
            <person name="Horikawa H."/>
            <person name="Hosoyama A."/>
            <person name="Ichinomiya M."/>
            <person name="Igarashi R."/>
            <person name="Iwashita K."/>
            <person name="Juvvadi P.R."/>
            <person name="Kato M."/>
            <person name="Kato Y."/>
            <person name="Kin T."/>
            <person name="Kokubun A."/>
            <person name="Maeda H."/>
            <person name="Maeyama N."/>
            <person name="Maruyama J."/>
            <person name="Nagasaki H."/>
            <person name="Nakajima T."/>
            <person name="Oda K."/>
            <person name="Okada K."/>
            <person name="Paulsen I."/>
            <person name="Sakamoto K."/>
            <person name="Sawano T."/>
            <person name="Takahashi M."/>
            <person name="Takase K."/>
            <person name="Terabayashi Y."/>
            <person name="Wortman J.R."/>
            <person name="Yamada O."/>
            <person name="Yamagata Y."/>
            <person name="Anazawa H."/>
            <person name="Hata Y."/>
            <person name="Koide Y."/>
            <person name="Komori T."/>
            <person name="Koyama Y."/>
            <person name="Minetoki T."/>
            <person name="Suharnan S."/>
            <person name="Tanaka A."/>
            <person name="Isono K."/>
            <person name="Kuhara S."/>
            <person name="Ogasawara N."/>
            <person name="Kikuchi H."/>
        </authorList>
    </citation>
    <scope>NUCLEOTIDE SEQUENCE [LARGE SCALE GENOMIC DNA]</scope>
    <source>
        <strain>ATCC 42149 / RIB 40</strain>
    </source>
</reference>
<sequence>MSNDKGLEEIPEDQSTTPHKPTSNVGSRLTRLFQSTGQIETNYDEITDSFDAMELKPELLRGVYAYGFERPSAIQQRAIKPIIKGSDVIAQAQSGTGKTATFSISALQKLDPNVKGCQALILAPTRELAQQIQKVVVAIGDFMNITCHACIGGTAVREDMKALGEGPEVVVGTPGRVHDMIQRRVLKTDHLKQFILDEADEMLSRGFTEQIYDIFQLLPQSTQVVLLSATMPQDVLEVTTKFMRDPVRILVKKQELTLEGIKQFYIAVEKEEWKLDTLSDLYETVTITQAVIFCNTRRKVDWLTDKLTARDFTVSAMHGDMEQSQRDVIMKEFRSGSSRVLIATDLLARGIDVQQVSLVINYDLPANRENYIHRIGRGGRFGRKGVAINFVTADDVRMMREIEQFYSTQIEEMPMNVADLI</sequence>
<dbReference type="EC" id="3.6.4.13"/>
<dbReference type="EMBL" id="BA000049">
    <property type="protein sequence ID" value="BAE56382.1"/>
    <property type="molecule type" value="Genomic_DNA"/>
</dbReference>
<dbReference type="SMR" id="Q2UPY3"/>
<dbReference type="STRING" id="510516.Q2UPY3"/>
<dbReference type="EnsemblFungi" id="BAE56382">
    <property type="protein sequence ID" value="BAE56382"/>
    <property type="gene ID" value="AO090005001461"/>
</dbReference>
<dbReference type="HOGENOM" id="CLU_003041_1_0_1"/>
<dbReference type="Proteomes" id="UP000006564">
    <property type="component" value="Chromosome 1"/>
</dbReference>
<dbReference type="GO" id="GO:0005737">
    <property type="term" value="C:cytoplasm"/>
    <property type="evidence" value="ECO:0007669"/>
    <property type="project" value="UniProtKB-SubCell"/>
</dbReference>
<dbReference type="GO" id="GO:0005524">
    <property type="term" value="F:ATP binding"/>
    <property type="evidence" value="ECO:0007669"/>
    <property type="project" value="UniProtKB-KW"/>
</dbReference>
<dbReference type="GO" id="GO:0016887">
    <property type="term" value="F:ATP hydrolysis activity"/>
    <property type="evidence" value="ECO:0007669"/>
    <property type="project" value="RHEA"/>
</dbReference>
<dbReference type="GO" id="GO:0003723">
    <property type="term" value="F:RNA binding"/>
    <property type="evidence" value="ECO:0007669"/>
    <property type="project" value="UniProtKB-KW"/>
</dbReference>
<dbReference type="GO" id="GO:0003724">
    <property type="term" value="F:RNA helicase activity"/>
    <property type="evidence" value="ECO:0007669"/>
    <property type="project" value="UniProtKB-EC"/>
</dbReference>
<dbReference type="GO" id="GO:0003743">
    <property type="term" value="F:translation initiation factor activity"/>
    <property type="evidence" value="ECO:0007669"/>
    <property type="project" value="UniProtKB-KW"/>
</dbReference>
<dbReference type="GO" id="GO:0002183">
    <property type="term" value="P:cytoplasmic translational initiation"/>
    <property type="evidence" value="ECO:0007669"/>
    <property type="project" value="EnsemblFungi"/>
</dbReference>
<dbReference type="CDD" id="cd18046">
    <property type="entry name" value="DEADc_EIF4AII_EIF4AI_DDX2"/>
    <property type="match status" value="1"/>
</dbReference>
<dbReference type="CDD" id="cd18787">
    <property type="entry name" value="SF2_C_DEAD"/>
    <property type="match status" value="1"/>
</dbReference>
<dbReference type="FunFam" id="3.40.50.300:FF:000089">
    <property type="entry name" value="Eukaryotic initiation factor 4A-II"/>
    <property type="match status" value="1"/>
</dbReference>
<dbReference type="FunFam" id="3.40.50.300:FF:000031">
    <property type="entry name" value="Eukaryotic initiation factor 4A-III"/>
    <property type="match status" value="1"/>
</dbReference>
<dbReference type="Gene3D" id="3.40.50.300">
    <property type="entry name" value="P-loop containing nucleotide triphosphate hydrolases"/>
    <property type="match status" value="2"/>
</dbReference>
<dbReference type="InterPro" id="IPR011545">
    <property type="entry name" value="DEAD/DEAH_box_helicase_dom"/>
</dbReference>
<dbReference type="InterPro" id="IPR044728">
    <property type="entry name" value="EIF4A_DEADc"/>
</dbReference>
<dbReference type="InterPro" id="IPR014001">
    <property type="entry name" value="Helicase_ATP-bd"/>
</dbReference>
<dbReference type="InterPro" id="IPR001650">
    <property type="entry name" value="Helicase_C-like"/>
</dbReference>
<dbReference type="InterPro" id="IPR027417">
    <property type="entry name" value="P-loop_NTPase"/>
</dbReference>
<dbReference type="InterPro" id="IPR000629">
    <property type="entry name" value="RNA-helicase_DEAD-box_CS"/>
</dbReference>
<dbReference type="InterPro" id="IPR014014">
    <property type="entry name" value="RNA_helicase_DEAD_Q_motif"/>
</dbReference>
<dbReference type="PANTHER" id="PTHR47958">
    <property type="entry name" value="ATP-DEPENDENT RNA HELICASE DBP3"/>
    <property type="match status" value="1"/>
</dbReference>
<dbReference type="Pfam" id="PF00270">
    <property type="entry name" value="DEAD"/>
    <property type="match status" value="1"/>
</dbReference>
<dbReference type="Pfam" id="PF00271">
    <property type="entry name" value="Helicase_C"/>
    <property type="match status" value="1"/>
</dbReference>
<dbReference type="SMART" id="SM00487">
    <property type="entry name" value="DEXDc"/>
    <property type="match status" value="1"/>
</dbReference>
<dbReference type="SMART" id="SM00490">
    <property type="entry name" value="HELICc"/>
    <property type="match status" value="1"/>
</dbReference>
<dbReference type="SUPFAM" id="SSF52540">
    <property type="entry name" value="P-loop containing nucleoside triphosphate hydrolases"/>
    <property type="match status" value="1"/>
</dbReference>
<dbReference type="PROSITE" id="PS00039">
    <property type="entry name" value="DEAD_ATP_HELICASE"/>
    <property type="match status" value="1"/>
</dbReference>
<dbReference type="PROSITE" id="PS51192">
    <property type="entry name" value="HELICASE_ATP_BIND_1"/>
    <property type="match status" value="1"/>
</dbReference>
<dbReference type="PROSITE" id="PS51194">
    <property type="entry name" value="HELICASE_CTER"/>
    <property type="match status" value="1"/>
</dbReference>
<dbReference type="PROSITE" id="PS51195">
    <property type="entry name" value="Q_MOTIF"/>
    <property type="match status" value="1"/>
</dbReference>
<proteinExistence type="inferred from homology"/>
<name>IF4A_ASPOR</name>
<evidence type="ECO:0000250" key="1"/>
<evidence type="ECO:0000255" key="2">
    <source>
        <dbReference type="PROSITE-ProRule" id="PRU00541"/>
    </source>
</evidence>
<evidence type="ECO:0000255" key="3">
    <source>
        <dbReference type="PROSITE-ProRule" id="PRU00542"/>
    </source>
</evidence>
<evidence type="ECO:0000256" key="4">
    <source>
        <dbReference type="SAM" id="MobiDB-lite"/>
    </source>
</evidence>
<evidence type="ECO:0000305" key="5"/>
<protein>
    <recommendedName>
        <fullName>ATP-dependent RNA helicase eIF4A</fullName>
        <ecNumber>3.6.4.13</ecNumber>
    </recommendedName>
    <alternativeName>
        <fullName>Eukaryotic initiation factor 4A</fullName>
        <shortName>eIF-4A</shortName>
    </alternativeName>
    <alternativeName>
        <fullName>Translation initiation factor 1</fullName>
    </alternativeName>
</protein>
<organism>
    <name type="scientific">Aspergillus oryzae (strain ATCC 42149 / RIB 40)</name>
    <name type="common">Yellow koji mold</name>
    <dbReference type="NCBI Taxonomy" id="510516"/>
    <lineage>
        <taxon>Eukaryota</taxon>
        <taxon>Fungi</taxon>
        <taxon>Dikarya</taxon>
        <taxon>Ascomycota</taxon>
        <taxon>Pezizomycotina</taxon>
        <taxon>Eurotiomycetes</taxon>
        <taxon>Eurotiomycetidae</taxon>
        <taxon>Eurotiales</taxon>
        <taxon>Aspergillaceae</taxon>
        <taxon>Aspergillus</taxon>
        <taxon>Aspergillus subgen. Circumdati</taxon>
    </lineage>
</organism>
<accession>Q2UPY3</accession>
<comment type="function">
    <text evidence="1">ATP-dependent RNA helicase which is a subunit of the eIF4F complex involved in cap recognition and is required for mRNA binding to ribosome. In the current model of translation initiation, eIF4A unwinds RNA secondary structures in the 5'-UTR of mRNAs which is necessary to allow efficient binding of the small ribosomal subunit, and subsequent scanning for the initiator codon (By similarity).</text>
</comment>
<comment type="catalytic activity">
    <reaction>
        <text>ATP + H2O = ADP + phosphate + H(+)</text>
        <dbReference type="Rhea" id="RHEA:13065"/>
        <dbReference type="ChEBI" id="CHEBI:15377"/>
        <dbReference type="ChEBI" id="CHEBI:15378"/>
        <dbReference type="ChEBI" id="CHEBI:30616"/>
        <dbReference type="ChEBI" id="CHEBI:43474"/>
        <dbReference type="ChEBI" id="CHEBI:456216"/>
        <dbReference type="EC" id="3.6.4.13"/>
    </reaction>
</comment>
<comment type="subunit">
    <text evidence="1">Component of the eIF4F complex, which composition varies with external and internal environmental conditions. It is composed of at least eIF4A, eIF4E and eIF4G (By similarity).</text>
</comment>
<comment type="subcellular location">
    <subcellularLocation>
        <location evidence="1">Cytoplasm</location>
    </subcellularLocation>
</comment>
<comment type="domain">
    <text>The Q motif is unique to and characteristic of the DEAD box family of RNA helicases and controls ATP binding and hydrolysis.</text>
</comment>
<comment type="similarity">
    <text evidence="5">Belongs to the DEAD box helicase family. eIF4A subfamily.</text>
</comment>
<feature type="chain" id="PRO_0000232132" description="ATP-dependent RNA helicase eIF4A">
    <location>
        <begin position="1"/>
        <end position="421"/>
    </location>
</feature>
<feature type="domain" description="Helicase ATP-binding" evidence="2">
    <location>
        <begin position="79"/>
        <end position="249"/>
    </location>
</feature>
<feature type="domain" description="Helicase C-terminal" evidence="3">
    <location>
        <begin position="260"/>
        <end position="421"/>
    </location>
</feature>
<feature type="region of interest" description="Disordered" evidence="4">
    <location>
        <begin position="1"/>
        <end position="26"/>
    </location>
</feature>
<feature type="short sequence motif" description="Q motif">
    <location>
        <begin position="48"/>
        <end position="76"/>
    </location>
</feature>
<feature type="short sequence motif" description="DEAD box">
    <location>
        <begin position="197"/>
        <end position="200"/>
    </location>
</feature>
<feature type="compositionally biased region" description="Polar residues" evidence="4">
    <location>
        <begin position="13"/>
        <end position="26"/>
    </location>
</feature>
<feature type="binding site" evidence="2">
    <location>
        <begin position="92"/>
        <end position="99"/>
    </location>
    <ligand>
        <name>ATP</name>
        <dbReference type="ChEBI" id="CHEBI:30616"/>
    </ligand>
</feature>